<keyword id="KW-0046">Antibiotic resistance</keyword>
<keyword id="KW-1015">Disulfide bond</keyword>
<keyword id="KW-0378">Hydrolase</keyword>
<keyword id="KW-1185">Reference proteome</keyword>
<keyword id="KW-0677">Repeat</keyword>
<keyword id="KW-0964">Secreted</keyword>
<keyword id="KW-0732">Signal</keyword>
<keyword id="KW-0802">TPR repeat</keyword>
<gene>
    <name type="primary">hcpE</name>
    <name type="ordered locus">HP_0235</name>
</gene>
<comment type="function">
    <text evidence="1">May hydrolyze 6-aminopenicillinic acid and 7-aminocephalosporanic acid (ACA) derivatives.</text>
</comment>
<comment type="catalytic activity">
    <reaction>
        <text>a beta-lactam + H2O = a substituted beta-amino acid</text>
        <dbReference type="Rhea" id="RHEA:20401"/>
        <dbReference type="ChEBI" id="CHEBI:15377"/>
        <dbReference type="ChEBI" id="CHEBI:35627"/>
        <dbReference type="ChEBI" id="CHEBI:140347"/>
        <dbReference type="EC" id="3.5.2.6"/>
    </reaction>
</comment>
<comment type="subcellular location">
    <subcellularLocation>
        <location evidence="3">Secreted</location>
    </subcellularLocation>
</comment>
<comment type="miscellaneous">
    <text>Antibodies against HcpE are present in sera from human patients infected by Helicobacter pylori.</text>
</comment>
<comment type="similarity">
    <text evidence="3">Belongs to the hcp beta-lactamase family.</text>
</comment>
<evidence type="ECO:0000250" key="1"/>
<evidence type="ECO:0000255" key="2"/>
<evidence type="ECO:0000305" key="3"/>
<proteinExistence type="inferred from homology"/>
<dbReference type="EC" id="3.5.2.6"/>
<dbReference type="EMBL" id="AE000511">
    <property type="protein sequence ID" value="AAD07303.1"/>
    <property type="molecule type" value="Genomic_DNA"/>
</dbReference>
<dbReference type="PIR" id="C64549">
    <property type="entry name" value="C64549"/>
</dbReference>
<dbReference type="RefSeq" id="NP_207033.1">
    <property type="nucleotide sequence ID" value="NC_000915.1"/>
</dbReference>
<dbReference type="RefSeq" id="WP_000538261.1">
    <property type="nucleotide sequence ID" value="NC_018939.1"/>
</dbReference>
<dbReference type="SMR" id="O25021"/>
<dbReference type="STRING" id="85962.HP_0235"/>
<dbReference type="PaxDb" id="85962-C694_01185"/>
<dbReference type="EnsemblBacteria" id="AAD07303">
    <property type="protein sequence ID" value="AAD07303"/>
    <property type="gene ID" value="HP_0235"/>
</dbReference>
<dbReference type="KEGG" id="heo:C694_01185"/>
<dbReference type="KEGG" id="hpy:HP_0235"/>
<dbReference type="PATRIC" id="fig|85962.47.peg.254"/>
<dbReference type="eggNOG" id="COG0790">
    <property type="taxonomic scope" value="Bacteria"/>
</dbReference>
<dbReference type="InParanoid" id="O25021"/>
<dbReference type="OrthoDB" id="9772133at2"/>
<dbReference type="PhylomeDB" id="O25021"/>
<dbReference type="Proteomes" id="UP000000429">
    <property type="component" value="Chromosome"/>
</dbReference>
<dbReference type="GO" id="GO:0005576">
    <property type="term" value="C:extracellular region"/>
    <property type="evidence" value="ECO:0007669"/>
    <property type="project" value="UniProtKB-SubCell"/>
</dbReference>
<dbReference type="GO" id="GO:0008800">
    <property type="term" value="F:beta-lactamase activity"/>
    <property type="evidence" value="ECO:0007669"/>
    <property type="project" value="UniProtKB-EC"/>
</dbReference>
<dbReference type="GO" id="GO:0046677">
    <property type="term" value="P:response to antibiotic"/>
    <property type="evidence" value="ECO:0007669"/>
    <property type="project" value="UniProtKB-KW"/>
</dbReference>
<dbReference type="Gene3D" id="1.25.40.10">
    <property type="entry name" value="Tetratricopeptide repeat domain"/>
    <property type="match status" value="2"/>
</dbReference>
<dbReference type="InterPro" id="IPR040239">
    <property type="entry name" value="HcpB-like"/>
</dbReference>
<dbReference type="InterPro" id="IPR006597">
    <property type="entry name" value="Sel1-like"/>
</dbReference>
<dbReference type="InterPro" id="IPR011990">
    <property type="entry name" value="TPR-like_helical_dom_sf"/>
</dbReference>
<dbReference type="InterPro" id="IPR019734">
    <property type="entry name" value="TPR_rpt"/>
</dbReference>
<dbReference type="PANTHER" id="PTHR13891">
    <property type="entry name" value="CYTOCHROME C OXIDASE ASSEMBLY FACTOR 7"/>
    <property type="match status" value="1"/>
</dbReference>
<dbReference type="PANTHER" id="PTHR13891:SF1">
    <property type="entry name" value="CYTOCHROME C OXIDASE ASSEMBLY FACTOR 7"/>
    <property type="match status" value="1"/>
</dbReference>
<dbReference type="Pfam" id="PF08238">
    <property type="entry name" value="Sel1"/>
    <property type="match status" value="8"/>
</dbReference>
<dbReference type="Pfam" id="PF13181">
    <property type="entry name" value="TPR_8"/>
    <property type="match status" value="1"/>
</dbReference>
<dbReference type="SMART" id="SM00671">
    <property type="entry name" value="SEL1"/>
    <property type="match status" value="9"/>
</dbReference>
<dbReference type="SUPFAM" id="SSF81901">
    <property type="entry name" value="HCP-like"/>
    <property type="match status" value="2"/>
</dbReference>
<reference key="1">
    <citation type="journal article" date="1997" name="Nature">
        <title>The complete genome sequence of the gastric pathogen Helicobacter pylori.</title>
        <authorList>
            <person name="Tomb J.-F."/>
            <person name="White O."/>
            <person name="Kerlavage A.R."/>
            <person name="Clayton R.A."/>
            <person name="Sutton G.G."/>
            <person name="Fleischmann R.D."/>
            <person name="Ketchum K.A."/>
            <person name="Klenk H.-P."/>
            <person name="Gill S.R."/>
            <person name="Dougherty B.A."/>
            <person name="Nelson K.E."/>
            <person name="Quackenbush J."/>
            <person name="Zhou L."/>
            <person name="Kirkness E.F."/>
            <person name="Peterson S.N."/>
            <person name="Loftus B.J."/>
            <person name="Richardson D.L."/>
            <person name="Dodson R.J."/>
            <person name="Khalak H.G."/>
            <person name="Glodek A."/>
            <person name="McKenney K."/>
            <person name="FitzGerald L.M."/>
            <person name="Lee N."/>
            <person name="Adams M.D."/>
            <person name="Hickey E.K."/>
            <person name="Berg D.E."/>
            <person name="Gocayne J.D."/>
            <person name="Utterback T.R."/>
            <person name="Peterson J.D."/>
            <person name="Kelley J.M."/>
            <person name="Cotton M.D."/>
            <person name="Weidman J.F."/>
            <person name="Fujii C."/>
            <person name="Bowman C."/>
            <person name="Watthey L."/>
            <person name="Wallin E."/>
            <person name="Hayes W.S."/>
            <person name="Borodovsky M."/>
            <person name="Karp P.D."/>
            <person name="Smith H.O."/>
            <person name="Fraser C.M."/>
            <person name="Venter J.C."/>
        </authorList>
    </citation>
    <scope>NUCLEOTIDE SEQUENCE [LARGE SCALE GENOMIC DNA]</scope>
    <source>
        <strain>ATCC 700392 / 26695</strain>
    </source>
</reference>
<reference key="2">
    <citation type="journal article" date="2003" name="Clin. Diagn. Lab. Immunol.">
        <title>Detection of high titers of antibody against Helicobacter cysteine-rich proteins A, B, C, and E in Helicobacter pylori-infected individuals.</title>
        <authorList>
            <person name="Mittl P.R.E."/>
            <person name="Luethy L."/>
            <person name="Reinhardt C."/>
            <person name="Joller H."/>
        </authorList>
    </citation>
    <scope>ANTIGENICITY</scope>
</reference>
<name>HCPE_HELPY</name>
<feature type="signal peptide" evidence="2">
    <location>
        <begin position="1"/>
        <end position="22"/>
    </location>
</feature>
<feature type="chain" id="PRO_0000013200" description="Putative beta-lactamase HcpE">
    <location>
        <begin position="23"/>
        <end position="355"/>
    </location>
</feature>
<feature type="repeat" description="TPR 1">
    <location>
        <begin position="27"/>
        <end position="60"/>
    </location>
</feature>
<feature type="repeat" description="TPR 2">
    <location>
        <begin position="63"/>
        <end position="96"/>
    </location>
</feature>
<feature type="repeat" description="TPR 3">
    <location>
        <begin position="98"/>
        <end position="131"/>
    </location>
</feature>
<feature type="repeat" description="TPR 4">
    <location>
        <begin position="132"/>
        <end position="166"/>
    </location>
</feature>
<feature type="repeat" description="TPR 5">
    <location>
        <begin position="202"/>
        <end position="240"/>
    </location>
</feature>
<feature type="repeat" description="TPR 6">
    <location>
        <begin position="245"/>
        <end position="275"/>
    </location>
</feature>
<feature type="repeat" description="TPR 7">
    <location>
        <begin position="276"/>
        <end position="311"/>
    </location>
</feature>
<feature type="repeat" description="TPR 8">
    <location>
        <begin position="312"/>
        <end position="344"/>
    </location>
</feature>
<feature type="disulfide bond" evidence="2">
    <location>
        <begin position="54"/>
        <end position="62"/>
    </location>
</feature>
<feature type="disulfide bond" evidence="2">
    <location>
        <begin position="90"/>
        <end position="98"/>
    </location>
</feature>
<feature type="disulfide bond" evidence="2">
    <location>
        <begin position="126"/>
        <end position="134"/>
    </location>
</feature>
<feature type="disulfide bond" evidence="2">
    <location>
        <begin position="160"/>
        <end position="168"/>
    </location>
</feature>
<feature type="disulfide bond" evidence="2">
    <location>
        <begin position="197"/>
        <end position="205"/>
    </location>
</feature>
<feature type="disulfide bond" evidence="2">
    <location>
        <begin position="234"/>
        <end position="242"/>
    </location>
</feature>
<feature type="disulfide bond" evidence="2">
    <location>
        <begin position="270"/>
        <end position="278"/>
    </location>
</feature>
<feature type="disulfide bond" evidence="2">
    <location>
        <begin position="306"/>
        <end position="314"/>
    </location>
</feature>
<feature type="disulfide bond" evidence="2">
    <location>
        <begin position="338"/>
        <end position="346"/>
    </location>
</feature>
<organism>
    <name type="scientific">Helicobacter pylori (strain ATCC 700392 / 26695)</name>
    <name type="common">Campylobacter pylori</name>
    <dbReference type="NCBI Taxonomy" id="85962"/>
    <lineage>
        <taxon>Bacteria</taxon>
        <taxon>Pseudomonadati</taxon>
        <taxon>Campylobacterota</taxon>
        <taxon>Epsilonproteobacteria</taxon>
        <taxon>Campylobacterales</taxon>
        <taxon>Helicobacteraceae</taxon>
        <taxon>Helicobacter</taxon>
    </lineage>
</organism>
<sequence length="355" mass="39399">MGVKFLKILVCGLFFWSLNAHLWGKQDNSFLGVAEKAYKSGNYSKATSYFKKACNDGVSEGCTQLGIIYENGQGTRIDYKKALEYYKTACQADDREGCFGLGGLYDEGLGTTQNYQEAIDAYAKACVLKHPESCYNLGIIYDRKIKGNADQAVTYYQKSCNFDMAKGCYVLGVAYEKGFLEVKQSNHKAVIYYLKACRLDDGQACRALGSLFENGDAGLDEDFEVAFDYLQKACGLNNSGGCASLGSMYMLGRYVKKDPQKAFNFFKQACDMGSAVSCSRMGFMYSQGDAVPKDLRKALDNYERGCDMGDEVGCFALAGMYYNMKDKENAIMIYDKGCKLGMKQACENLTKLRGY</sequence>
<protein>
    <recommendedName>
        <fullName>Putative beta-lactamase HcpE</fullName>
        <ecNumber>3.5.2.6</ecNumber>
    </recommendedName>
    <alternativeName>
        <fullName>Cysteine-rich protein E</fullName>
    </alternativeName>
</protein>
<accession>O25021</accession>